<proteinExistence type="inferred from homology"/>
<gene>
    <name evidence="1" type="primary">trpA</name>
    <name type="ordered locus">BMA10229_1859</name>
</gene>
<protein>
    <recommendedName>
        <fullName evidence="1">Tryptophan synthase alpha chain</fullName>
        <ecNumber evidence="1">4.2.1.20</ecNumber>
    </recommendedName>
</protein>
<evidence type="ECO:0000255" key="1">
    <source>
        <dbReference type="HAMAP-Rule" id="MF_00131"/>
    </source>
</evidence>
<name>TRPA_BURM9</name>
<comment type="function">
    <text evidence="1">The alpha subunit is responsible for the aldol cleavage of indoleglycerol phosphate to indole and glyceraldehyde 3-phosphate.</text>
</comment>
<comment type="catalytic activity">
    <reaction evidence="1">
        <text>(1S,2R)-1-C-(indol-3-yl)glycerol 3-phosphate + L-serine = D-glyceraldehyde 3-phosphate + L-tryptophan + H2O</text>
        <dbReference type="Rhea" id="RHEA:10532"/>
        <dbReference type="ChEBI" id="CHEBI:15377"/>
        <dbReference type="ChEBI" id="CHEBI:33384"/>
        <dbReference type="ChEBI" id="CHEBI:57912"/>
        <dbReference type="ChEBI" id="CHEBI:58866"/>
        <dbReference type="ChEBI" id="CHEBI:59776"/>
        <dbReference type="EC" id="4.2.1.20"/>
    </reaction>
</comment>
<comment type="pathway">
    <text evidence="1">Amino-acid biosynthesis; L-tryptophan biosynthesis; L-tryptophan from chorismate: step 5/5.</text>
</comment>
<comment type="subunit">
    <text evidence="1">Tetramer of two alpha and two beta chains.</text>
</comment>
<comment type="similarity">
    <text evidence="1">Belongs to the TrpA family.</text>
</comment>
<sequence>MSRIQNTFAALAAQGRKGLIPFITAGDPDPAKTVELMHALAEGGADVIELGVPFSDPMADGPVIQRSSERALAKGVTLHSVLDDVKRFRARDQKTPVVLMGYANPIERMGADAFAAAARDAGVDGVLVVDYPPEESHDFAAKMRAAGIDPIFLLAPTSTDDRIAAVGQVASGYVYYVSLKGVTGAANLDVSSIAGKIPAIKSRVPLPVGVGFGIRDAATARAVAEVADAVVIGSRLVQLLEQAVPERAAAELAGFVAELRAAIDGAAKPAA</sequence>
<organism>
    <name type="scientific">Burkholderia mallei (strain NCTC 10229)</name>
    <dbReference type="NCBI Taxonomy" id="412022"/>
    <lineage>
        <taxon>Bacteria</taxon>
        <taxon>Pseudomonadati</taxon>
        <taxon>Pseudomonadota</taxon>
        <taxon>Betaproteobacteria</taxon>
        <taxon>Burkholderiales</taxon>
        <taxon>Burkholderiaceae</taxon>
        <taxon>Burkholderia</taxon>
        <taxon>pseudomallei group</taxon>
    </lineage>
</organism>
<dbReference type="EC" id="4.2.1.20" evidence="1"/>
<dbReference type="EMBL" id="CP000545">
    <property type="protein sequence ID" value="ABN00188.2"/>
    <property type="molecule type" value="Genomic_DNA"/>
</dbReference>
<dbReference type="RefSeq" id="WP_004187543.1">
    <property type="nucleotide sequence ID" value="NC_008835.1"/>
</dbReference>
<dbReference type="SMR" id="A2S138"/>
<dbReference type="GeneID" id="92977654"/>
<dbReference type="KEGG" id="bml:BMA10229_1859"/>
<dbReference type="HOGENOM" id="CLU_016734_0_0_4"/>
<dbReference type="UniPathway" id="UPA00035">
    <property type="reaction ID" value="UER00044"/>
</dbReference>
<dbReference type="Proteomes" id="UP000002283">
    <property type="component" value="Chromosome II"/>
</dbReference>
<dbReference type="GO" id="GO:0005829">
    <property type="term" value="C:cytosol"/>
    <property type="evidence" value="ECO:0007669"/>
    <property type="project" value="TreeGrafter"/>
</dbReference>
<dbReference type="GO" id="GO:0004834">
    <property type="term" value="F:tryptophan synthase activity"/>
    <property type="evidence" value="ECO:0007669"/>
    <property type="project" value="UniProtKB-UniRule"/>
</dbReference>
<dbReference type="CDD" id="cd04724">
    <property type="entry name" value="Tryptophan_synthase_alpha"/>
    <property type="match status" value="1"/>
</dbReference>
<dbReference type="FunFam" id="3.20.20.70:FF:000037">
    <property type="entry name" value="Tryptophan synthase alpha chain"/>
    <property type="match status" value="1"/>
</dbReference>
<dbReference type="Gene3D" id="3.20.20.70">
    <property type="entry name" value="Aldolase class I"/>
    <property type="match status" value="1"/>
</dbReference>
<dbReference type="HAMAP" id="MF_00131">
    <property type="entry name" value="Trp_synth_alpha"/>
    <property type="match status" value="1"/>
</dbReference>
<dbReference type="InterPro" id="IPR013785">
    <property type="entry name" value="Aldolase_TIM"/>
</dbReference>
<dbReference type="InterPro" id="IPR011060">
    <property type="entry name" value="RibuloseP-bd_barrel"/>
</dbReference>
<dbReference type="InterPro" id="IPR018204">
    <property type="entry name" value="Trp_synthase_alpha_AS"/>
</dbReference>
<dbReference type="InterPro" id="IPR002028">
    <property type="entry name" value="Trp_synthase_suA"/>
</dbReference>
<dbReference type="NCBIfam" id="TIGR00262">
    <property type="entry name" value="trpA"/>
    <property type="match status" value="1"/>
</dbReference>
<dbReference type="PANTHER" id="PTHR43406:SF1">
    <property type="entry name" value="TRYPTOPHAN SYNTHASE ALPHA CHAIN, CHLOROPLASTIC"/>
    <property type="match status" value="1"/>
</dbReference>
<dbReference type="PANTHER" id="PTHR43406">
    <property type="entry name" value="TRYPTOPHAN SYNTHASE, ALPHA CHAIN"/>
    <property type="match status" value="1"/>
</dbReference>
<dbReference type="Pfam" id="PF00290">
    <property type="entry name" value="Trp_syntA"/>
    <property type="match status" value="1"/>
</dbReference>
<dbReference type="SUPFAM" id="SSF51366">
    <property type="entry name" value="Ribulose-phoshate binding barrel"/>
    <property type="match status" value="1"/>
</dbReference>
<dbReference type="PROSITE" id="PS00167">
    <property type="entry name" value="TRP_SYNTHASE_ALPHA"/>
    <property type="match status" value="1"/>
</dbReference>
<accession>A2S138</accession>
<accession>A2S137</accession>
<keyword id="KW-0028">Amino-acid biosynthesis</keyword>
<keyword id="KW-0057">Aromatic amino acid biosynthesis</keyword>
<keyword id="KW-0456">Lyase</keyword>
<keyword id="KW-0822">Tryptophan biosynthesis</keyword>
<feature type="chain" id="PRO_1000018176" description="Tryptophan synthase alpha chain">
    <location>
        <begin position="1"/>
        <end position="271"/>
    </location>
</feature>
<feature type="active site" description="Proton acceptor" evidence="1">
    <location>
        <position position="49"/>
    </location>
</feature>
<feature type="active site" description="Proton acceptor" evidence="1">
    <location>
        <position position="60"/>
    </location>
</feature>
<reference key="1">
    <citation type="journal article" date="2010" name="Genome Biol. Evol.">
        <title>Continuing evolution of Burkholderia mallei through genome reduction and large-scale rearrangements.</title>
        <authorList>
            <person name="Losada L."/>
            <person name="Ronning C.M."/>
            <person name="DeShazer D."/>
            <person name="Woods D."/>
            <person name="Fedorova N."/>
            <person name="Kim H.S."/>
            <person name="Shabalina S.A."/>
            <person name="Pearson T.R."/>
            <person name="Brinkac L."/>
            <person name="Tan P."/>
            <person name="Nandi T."/>
            <person name="Crabtree J."/>
            <person name="Badger J."/>
            <person name="Beckstrom-Sternberg S."/>
            <person name="Saqib M."/>
            <person name="Schutzer S.E."/>
            <person name="Keim P."/>
            <person name="Nierman W.C."/>
        </authorList>
    </citation>
    <scope>NUCLEOTIDE SEQUENCE [LARGE SCALE GENOMIC DNA]</scope>
    <source>
        <strain>NCTC 10229</strain>
    </source>
</reference>
<reference key="2">
    <citation type="submission" date="2009-10" db="EMBL/GenBank/DDBJ databases">
        <authorList>
            <person name="Brinkac L.M."/>
            <person name="Harkins D.M."/>
            <person name="Shrivastava S."/>
            <person name="Durkin A.S."/>
            <person name="Sutton G."/>
        </authorList>
    </citation>
    <scope>SEQUENCE REVISION</scope>
</reference>